<evidence type="ECO:0000255" key="1">
    <source>
        <dbReference type="HAMAP-Rule" id="MF_01338"/>
    </source>
</evidence>
<evidence type="ECO:0000305" key="2"/>
<comment type="function">
    <text evidence="1">RuBisCO catalyzes two reactions: the carboxylation of D-ribulose 1,5-bisphosphate, the primary event in carbon dioxide fixation, as well as the oxidative fragmentation of the pentose substrate in the photorespiration process. Both reactions occur simultaneously and in competition at the same active site.</text>
</comment>
<comment type="catalytic activity">
    <reaction evidence="1">
        <text>2 (2R)-3-phosphoglycerate + 2 H(+) = D-ribulose 1,5-bisphosphate + CO2 + H2O</text>
        <dbReference type="Rhea" id="RHEA:23124"/>
        <dbReference type="ChEBI" id="CHEBI:15377"/>
        <dbReference type="ChEBI" id="CHEBI:15378"/>
        <dbReference type="ChEBI" id="CHEBI:16526"/>
        <dbReference type="ChEBI" id="CHEBI:57870"/>
        <dbReference type="ChEBI" id="CHEBI:58272"/>
        <dbReference type="EC" id="4.1.1.39"/>
    </reaction>
</comment>
<comment type="catalytic activity">
    <reaction evidence="1">
        <text>D-ribulose 1,5-bisphosphate + O2 = 2-phosphoglycolate + (2R)-3-phosphoglycerate + 2 H(+)</text>
        <dbReference type="Rhea" id="RHEA:36631"/>
        <dbReference type="ChEBI" id="CHEBI:15378"/>
        <dbReference type="ChEBI" id="CHEBI:15379"/>
        <dbReference type="ChEBI" id="CHEBI:57870"/>
        <dbReference type="ChEBI" id="CHEBI:58033"/>
        <dbReference type="ChEBI" id="CHEBI:58272"/>
    </reaction>
</comment>
<comment type="cofactor">
    <cofactor evidence="1">
        <name>Mg(2+)</name>
        <dbReference type="ChEBI" id="CHEBI:18420"/>
    </cofactor>
    <text evidence="1">Binds 1 Mg(2+) ion per subunit.</text>
</comment>
<comment type="subunit">
    <text evidence="1">Heterohexadecamer of 8 large chains and 8 small chains; disulfide-linked. The disulfide link is formed within the large subunit homodimers.</text>
</comment>
<comment type="subcellular location">
    <subcellularLocation>
        <location>Plastid</location>
        <location>Chloroplast</location>
    </subcellularLocation>
</comment>
<comment type="PTM">
    <text evidence="1">The disulfide bond which can form in the large chain dimeric partners within the hexadecamer appears to be associated with oxidative stress and protein turnover.</text>
</comment>
<comment type="miscellaneous">
    <text evidence="1">The basic functional RuBisCO is composed of a large chain homodimer in a 'head-to-tail' conformation. In form I RuBisCO this homodimer is arranged in a barrel-like tetramer with the small subunits forming a tetrameric 'cap' on each end of the 'barrel'.</text>
</comment>
<comment type="similarity">
    <text evidence="1">Belongs to the RuBisCO large chain family. Type I subfamily.</text>
</comment>
<feature type="propeptide" id="PRO_0000031443" evidence="1">
    <location>
        <begin position="1"/>
        <end position="2"/>
    </location>
</feature>
<feature type="chain" id="PRO_0000031444" description="Ribulose bisphosphate carboxylase large chain">
    <location>
        <begin position="3"/>
        <end position="475"/>
    </location>
</feature>
<feature type="active site" description="Proton acceptor" evidence="1">
    <location>
        <position position="175"/>
    </location>
</feature>
<feature type="active site" description="Proton acceptor" evidence="1">
    <location>
        <position position="294"/>
    </location>
</feature>
<feature type="binding site" description="in homodimeric partner" evidence="1">
    <location>
        <position position="123"/>
    </location>
    <ligand>
        <name>substrate</name>
    </ligand>
</feature>
<feature type="binding site" evidence="1">
    <location>
        <position position="173"/>
    </location>
    <ligand>
        <name>substrate</name>
    </ligand>
</feature>
<feature type="binding site" evidence="1">
    <location>
        <position position="177"/>
    </location>
    <ligand>
        <name>substrate</name>
    </ligand>
</feature>
<feature type="binding site" description="via carbamate group" evidence="1">
    <location>
        <position position="201"/>
    </location>
    <ligand>
        <name>Mg(2+)</name>
        <dbReference type="ChEBI" id="CHEBI:18420"/>
    </ligand>
</feature>
<feature type="binding site" evidence="1">
    <location>
        <position position="203"/>
    </location>
    <ligand>
        <name>Mg(2+)</name>
        <dbReference type="ChEBI" id="CHEBI:18420"/>
    </ligand>
</feature>
<feature type="binding site" evidence="1">
    <location>
        <position position="204"/>
    </location>
    <ligand>
        <name>Mg(2+)</name>
        <dbReference type="ChEBI" id="CHEBI:18420"/>
    </ligand>
</feature>
<feature type="binding site" evidence="1">
    <location>
        <position position="295"/>
    </location>
    <ligand>
        <name>substrate</name>
    </ligand>
</feature>
<feature type="binding site" evidence="1">
    <location>
        <position position="327"/>
    </location>
    <ligand>
        <name>substrate</name>
    </ligand>
</feature>
<feature type="binding site" evidence="1">
    <location>
        <position position="379"/>
    </location>
    <ligand>
        <name>substrate</name>
    </ligand>
</feature>
<feature type="site" description="Transition state stabilizer" evidence="1">
    <location>
        <position position="334"/>
    </location>
</feature>
<feature type="modified residue" description="N-acetylproline" evidence="1">
    <location>
        <position position="3"/>
    </location>
</feature>
<feature type="modified residue" description="N6,N6,N6-trimethyllysine" evidence="1">
    <location>
        <position position="14"/>
    </location>
</feature>
<feature type="modified residue" description="N6-carboxylysine" evidence="1">
    <location>
        <position position="201"/>
    </location>
</feature>
<feature type="disulfide bond" description="Interchain; in linked form" evidence="1">
    <location>
        <position position="247"/>
    </location>
</feature>
<feature type="sequence conflict" description="In Ref. 1." evidence="2" ref="1">
    <original>K</original>
    <variation>N</variation>
    <location>
        <position position="32"/>
    </location>
</feature>
<feature type="sequence conflict" description="In Ref. 1." evidence="2" ref="1">
    <original>F</original>
    <variation>V</variation>
    <location>
        <position position="127"/>
    </location>
</feature>
<feature type="sequence conflict" description="In Ref. 1." evidence="2" ref="1">
    <original>GI</original>
    <variation>RS</variation>
    <location>
        <begin position="154"/>
        <end position="155"/>
    </location>
</feature>
<feature type="sequence conflict" description="In Ref. 1." evidence="2" ref="1">
    <original>L</original>
    <variation>I</variation>
    <location>
        <position position="170"/>
    </location>
</feature>
<feature type="sequence conflict" description="In Ref. 1." evidence="2" ref="1">
    <original>F</original>
    <variation>L</variation>
    <location>
        <position position="226"/>
    </location>
</feature>
<feature type="sequence conflict" description="In Ref. 1." evidence="2" ref="1">
    <original>DS</original>
    <variation>EF</variation>
    <location>
        <begin position="397"/>
        <end position="398"/>
    </location>
</feature>
<feature type="sequence conflict" description="In Ref. 1." evidence="2" ref="1">
    <original>GNA</original>
    <variation>ETK</variation>
    <location>
        <begin position="412"/>
        <end position="414"/>
    </location>
</feature>
<keyword id="KW-0007">Acetylation</keyword>
<keyword id="KW-0113">Calvin cycle</keyword>
<keyword id="KW-0120">Carbon dioxide fixation</keyword>
<keyword id="KW-0150">Chloroplast</keyword>
<keyword id="KW-1015">Disulfide bond</keyword>
<keyword id="KW-0456">Lyase</keyword>
<keyword id="KW-0460">Magnesium</keyword>
<keyword id="KW-0479">Metal-binding</keyword>
<keyword id="KW-0488">Methylation</keyword>
<keyword id="KW-0503">Monooxygenase</keyword>
<keyword id="KW-0560">Oxidoreductase</keyword>
<keyword id="KW-0601">Photorespiration</keyword>
<keyword id="KW-0602">Photosynthesis</keyword>
<keyword id="KW-0934">Plastid</keyword>
<keyword id="KW-1185">Reference proteome</keyword>
<dbReference type="EC" id="4.1.1.39" evidence="1"/>
<dbReference type="EMBL" id="DQ424856">
    <property type="protein sequence ID" value="ABE47542.1"/>
    <property type="molecule type" value="Genomic_DNA"/>
</dbReference>
<dbReference type="PIR" id="A30610">
    <property type="entry name" value="A30610"/>
</dbReference>
<dbReference type="RefSeq" id="YP_567084.1">
    <property type="nucleotide sequence ID" value="NC_007957.1"/>
</dbReference>
<dbReference type="SMR" id="P56648"/>
<dbReference type="FunCoup" id="P56648">
    <property type="interactions" value="422"/>
</dbReference>
<dbReference type="STRING" id="29760.P56648"/>
<dbReference type="PaxDb" id="29760-VIT_07s0129g00790.t01"/>
<dbReference type="EnsemblPlants" id="Vitvi00g04191_t001">
    <property type="protein sequence ID" value="Vitvi00g04191_P001"/>
    <property type="gene ID" value="Vitvi00g04191"/>
</dbReference>
<dbReference type="GeneID" id="4025045"/>
<dbReference type="Gramene" id="Vitvi00g04191_t001">
    <property type="protein sequence ID" value="Vitvi00g04191_P001"/>
    <property type="gene ID" value="Vitvi00g04191"/>
</dbReference>
<dbReference type="KEGG" id="vvi:4025045"/>
<dbReference type="eggNOG" id="ENOG502QTI9">
    <property type="taxonomic scope" value="Eukaryota"/>
</dbReference>
<dbReference type="InParanoid" id="P56648"/>
<dbReference type="OrthoDB" id="563909at2759"/>
<dbReference type="Proteomes" id="UP000009183">
    <property type="component" value="Chloroplast"/>
</dbReference>
<dbReference type="ExpressionAtlas" id="P56648">
    <property type="expression patterns" value="baseline and differential"/>
</dbReference>
<dbReference type="GO" id="GO:0009507">
    <property type="term" value="C:chloroplast"/>
    <property type="evidence" value="ECO:0007669"/>
    <property type="project" value="UniProtKB-SubCell"/>
</dbReference>
<dbReference type="GO" id="GO:0000287">
    <property type="term" value="F:magnesium ion binding"/>
    <property type="evidence" value="ECO:0007669"/>
    <property type="project" value="UniProtKB-UniRule"/>
</dbReference>
<dbReference type="GO" id="GO:0004497">
    <property type="term" value="F:monooxygenase activity"/>
    <property type="evidence" value="ECO:0007669"/>
    <property type="project" value="UniProtKB-KW"/>
</dbReference>
<dbReference type="GO" id="GO:0016984">
    <property type="term" value="F:ribulose-bisphosphate carboxylase activity"/>
    <property type="evidence" value="ECO:0007669"/>
    <property type="project" value="UniProtKB-UniRule"/>
</dbReference>
<dbReference type="GO" id="GO:0009853">
    <property type="term" value="P:photorespiration"/>
    <property type="evidence" value="ECO:0007669"/>
    <property type="project" value="UniProtKB-KW"/>
</dbReference>
<dbReference type="GO" id="GO:0019253">
    <property type="term" value="P:reductive pentose-phosphate cycle"/>
    <property type="evidence" value="ECO:0007669"/>
    <property type="project" value="UniProtKB-UniRule"/>
</dbReference>
<dbReference type="CDD" id="cd08212">
    <property type="entry name" value="RuBisCO_large_I"/>
    <property type="match status" value="1"/>
</dbReference>
<dbReference type="FunFam" id="3.20.20.110:FF:000001">
    <property type="entry name" value="Ribulose bisphosphate carboxylase large chain"/>
    <property type="match status" value="1"/>
</dbReference>
<dbReference type="FunFam" id="3.30.70.150:FF:000001">
    <property type="entry name" value="Ribulose bisphosphate carboxylase large chain"/>
    <property type="match status" value="1"/>
</dbReference>
<dbReference type="Gene3D" id="3.20.20.110">
    <property type="entry name" value="Ribulose bisphosphate carboxylase, large subunit, C-terminal domain"/>
    <property type="match status" value="1"/>
</dbReference>
<dbReference type="Gene3D" id="3.30.70.150">
    <property type="entry name" value="RuBisCO large subunit, N-terminal domain"/>
    <property type="match status" value="1"/>
</dbReference>
<dbReference type="HAMAP" id="MF_01338">
    <property type="entry name" value="RuBisCO_L_type1"/>
    <property type="match status" value="1"/>
</dbReference>
<dbReference type="InterPro" id="IPR033966">
    <property type="entry name" value="RuBisCO"/>
</dbReference>
<dbReference type="InterPro" id="IPR020878">
    <property type="entry name" value="RuBisCo_large_chain_AS"/>
</dbReference>
<dbReference type="InterPro" id="IPR000685">
    <property type="entry name" value="RuBisCO_lsu_C"/>
</dbReference>
<dbReference type="InterPro" id="IPR036376">
    <property type="entry name" value="RuBisCO_lsu_C_sf"/>
</dbReference>
<dbReference type="InterPro" id="IPR017443">
    <property type="entry name" value="RuBisCO_lsu_fd_N"/>
</dbReference>
<dbReference type="InterPro" id="IPR036422">
    <property type="entry name" value="RuBisCO_lsu_N_sf"/>
</dbReference>
<dbReference type="InterPro" id="IPR020888">
    <property type="entry name" value="RuBisCO_lsuI"/>
</dbReference>
<dbReference type="NCBIfam" id="NF003252">
    <property type="entry name" value="PRK04208.1"/>
    <property type="match status" value="1"/>
</dbReference>
<dbReference type="PANTHER" id="PTHR42704">
    <property type="entry name" value="RIBULOSE BISPHOSPHATE CARBOXYLASE"/>
    <property type="match status" value="1"/>
</dbReference>
<dbReference type="PANTHER" id="PTHR42704:SF15">
    <property type="entry name" value="RIBULOSE BISPHOSPHATE CARBOXYLASE LARGE CHAIN"/>
    <property type="match status" value="1"/>
</dbReference>
<dbReference type="Pfam" id="PF00016">
    <property type="entry name" value="RuBisCO_large"/>
    <property type="match status" value="1"/>
</dbReference>
<dbReference type="Pfam" id="PF02788">
    <property type="entry name" value="RuBisCO_large_N"/>
    <property type="match status" value="1"/>
</dbReference>
<dbReference type="SFLD" id="SFLDG01052">
    <property type="entry name" value="RuBisCO"/>
    <property type="match status" value="1"/>
</dbReference>
<dbReference type="SFLD" id="SFLDS00014">
    <property type="entry name" value="RuBisCO"/>
    <property type="match status" value="1"/>
</dbReference>
<dbReference type="SFLD" id="SFLDG00301">
    <property type="entry name" value="RuBisCO-like_proteins"/>
    <property type="match status" value="1"/>
</dbReference>
<dbReference type="SUPFAM" id="SSF51649">
    <property type="entry name" value="RuBisCo, C-terminal domain"/>
    <property type="match status" value="1"/>
</dbReference>
<dbReference type="SUPFAM" id="SSF54966">
    <property type="entry name" value="RuBisCO, large subunit, small (N-terminal) domain"/>
    <property type="match status" value="1"/>
</dbReference>
<dbReference type="PROSITE" id="PS00157">
    <property type="entry name" value="RUBISCO_LARGE"/>
    <property type="match status" value="1"/>
</dbReference>
<reference key="1">
    <citation type="journal article" date="1994" name="Acta Bot. Sin.">
        <title>Structure of the chloroplast rbcL gene from grape (Vitis vinifera).</title>
        <authorList>
            <person name="Huang Y."/>
            <person name="Ma C."/>
            <person name="Li C.L."/>
            <person name="Wu N.H."/>
        </authorList>
    </citation>
    <scope>NUCLEOTIDE SEQUENCE [GENOMIC DNA]</scope>
</reference>
<reference key="2">
    <citation type="journal article" date="2006" name="BMC Evol. Biol.">
        <title>Phylogenetic analyses of Vitis (Vitaceae) based on complete chloroplast genome sequences: effects of taxon sampling and phylogenetic methods on resolving relationships among rosids.</title>
        <authorList>
            <person name="Jansen R.K."/>
            <person name="Kaittanis C."/>
            <person name="Lee S.-B."/>
            <person name="Saski C."/>
            <person name="Tomkins J."/>
            <person name="Alverson A.J."/>
            <person name="Daniell H."/>
        </authorList>
    </citation>
    <scope>NUCLEOTIDE SEQUENCE [LARGE SCALE GENOMIC DNA]</scope>
    <source>
        <strain>cv. Maxxa</strain>
    </source>
</reference>
<sequence length="475" mass="52519">MSPQTETKASVGFKAGVKDYKLTYYTPEYETKPTDILAAFRVTPQPGVPPEEAGAAVAAESSTGTWTTVWTDGLTSLDRYKGRCYHIEPVAGEESQFIAYVAYPLDLFEEGSVTNMFTSIVGNVFGFKALRALRLEDLRIPPAYSKTFQGPPHGIQVERDKLNKYGRPLLGCTIKPKLGLSAKNYGRAVYECLRGGLDFTKDDENVNSQPFMRWRDRFLFCAEAIFKSQAETGEIKGHYLNATAGTCEEMIKRAVFARELGVPIVMHDYLTGGFTANTSLAHYCRDNGLLLHIHRAMHAVIDRQKNHGMHFRVLAKALRLSGGDHIHAGTVVGKLEGEREITLGFVDLLRDDFVEKDRSRGIYFTQDWVSLPGVLPVASGGIHVWHMPALTEIFGDDSVLQFGGGTLGHPWGNAPGAVANRVALEACVQARNEGRDLAREGNEIIRAASKWSPELAAACEVWKEIKFEFPAMDTL</sequence>
<proteinExistence type="inferred from homology"/>
<name>RBL_VITVI</name>
<accession>P56648</accession>
<accession>Q0ZJ12</accession>
<organism>
    <name type="scientific">Vitis vinifera</name>
    <name type="common">Grape</name>
    <dbReference type="NCBI Taxonomy" id="29760"/>
    <lineage>
        <taxon>Eukaryota</taxon>
        <taxon>Viridiplantae</taxon>
        <taxon>Streptophyta</taxon>
        <taxon>Embryophyta</taxon>
        <taxon>Tracheophyta</taxon>
        <taxon>Spermatophyta</taxon>
        <taxon>Magnoliopsida</taxon>
        <taxon>eudicotyledons</taxon>
        <taxon>Gunneridae</taxon>
        <taxon>Pentapetalae</taxon>
        <taxon>rosids</taxon>
        <taxon>Vitales</taxon>
        <taxon>Vitaceae</taxon>
        <taxon>Viteae</taxon>
        <taxon>Vitis</taxon>
    </lineage>
</organism>
<gene>
    <name evidence="1" type="primary">rbcL</name>
</gene>
<protein>
    <recommendedName>
        <fullName evidence="1">Ribulose bisphosphate carboxylase large chain</fullName>
        <shortName evidence="1">RuBisCO large subunit</shortName>
        <ecNumber evidence="1">4.1.1.39</ecNumber>
    </recommendedName>
</protein>
<geneLocation type="chloroplast"/>